<proteinExistence type="inferred from homology"/>
<gene>
    <name evidence="1" type="primary">fhs</name>
    <name type="ordered locus">SPJ_1143</name>
</gene>
<evidence type="ECO:0000255" key="1">
    <source>
        <dbReference type="HAMAP-Rule" id="MF_01543"/>
    </source>
</evidence>
<feature type="chain" id="PRO_1000185268" description="Formate--tetrahydrofolate ligase">
    <location>
        <begin position="1"/>
        <end position="556"/>
    </location>
</feature>
<feature type="binding site" evidence="1">
    <location>
        <begin position="65"/>
        <end position="72"/>
    </location>
    <ligand>
        <name>ATP</name>
        <dbReference type="ChEBI" id="CHEBI:30616"/>
    </ligand>
</feature>
<keyword id="KW-0067">ATP-binding</keyword>
<keyword id="KW-0436">Ligase</keyword>
<keyword id="KW-0547">Nucleotide-binding</keyword>
<keyword id="KW-0554">One-carbon metabolism</keyword>
<accession>C1CEI6</accession>
<organism>
    <name type="scientific">Streptococcus pneumoniae (strain JJA)</name>
    <dbReference type="NCBI Taxonomy" id="488222"/>
    <lineage>
        <taxon>Bacteria</taxon>
        <taxon>Bacillati</taxon>
        <taxon>Bacillota</taxon>
        <taxon>Bacilli</taxon>
        <taxon>Lactobacillales</taxon>
        <taxon>Streptococcaceae</taxon>
        <taxon>Streptococcus</taxon>
    </lineage>
</organism>
<comment type="catalytic activity">
    <reaction evidence="1">
        <text>(6S)-5,6,7,8-tetrahydrofolate + formate + ATP = (6R)-10-formyltetrahydrofolate + ADP + phosphate</text>
        <dbReference type="Rhea" id="RHEA:20221"/>
        <dbReference type="ChEBI" id="CHEBI:15740"/>
        <dbReference type="ChEBI" id="CHEBI:30616"/>
        <dbReference type="ChEBI" id="CHEBI:43474"/>
        <dbReference type="ChEBI" id="CHEBI:57453"/>
        <dbReference type="ChEBI" id="CHEBI:195366"/>
        <dbReference type="ChEBI" id="CHEBI:456216"/>
        <dbReference type="EC" id="6.3.4.3"/>
    </reaction>
</comment>
<comment type="pathway">
    <text evidence="1">One-carbon metabolism; tetrahydrofolate interconversion.</text>
</comment>
<comment type="similarity">
    <text evidence="1">Belongs to the formate--tetrahydrofolate ligase family.</text>
</comment>
<dbReference type="EC" id="6.3.4.3" evidence="1"/>
<dbReference type="EMBL" id="CP000919">
    <property type="protein sequence ID" value="ACO19636.1"/>
    <property type="molecule type" value="Genomic_DNA"/>
</dbReference>
<dbReference type="RefSeq" id="WP_000845273.1">
    <property type="nucleotide sequence ID" value="NC_012466.1"/>
</dbReference>
<dbReference type="SMR" id="C1CEI6"/>
<dbReference type="KEGG" id="sjj:SPJ_1143"/>
<dbReference type="HOGENOM" id="CLU_003601_3_3_9"/>
<dbReference type="UniPathway" id="UPA00193"/>
<dbReference type="Proteomes" id="UP000002206">
    <property type="component" value="Chromosome"/>
</dbReference>
<dbReference type="GO" id="GO:0005524">
    <property type="term" value="F:ATP binding"/>
    <property type="evidence" value="ECO:0007669"/>
    <property type="project" value="UniProtKB-UniRule"/>
</dbReference>
<dbReference type="GO" id="GO:0004329">
    <property type="term" value="F:formate-tetrahydrofolate ligase activity"/>
    <property type="evidence" value="ECO:0007669"/>
    <property type="project" value="UniProtKB-UniRule"/>
</dbReference>
<dbReference type="GO" id="GO:0035999">
    <property type="term" value="P:tetrahydrofolate interconversion"/>
    <property type="evidence" value="ECO:0007669"/>
    <property type="project" value="UniProtKB-UniRule"/>
</dbReference>
<dbReference type="CDD" id="cd00477">
    <property type="entry name" value="FTHFS"/>
    <property type="match status" value="1"/>
</dbReference>
<dbReference type="FunFam" id="3.30.1510.10:FF:000001">
    <property type="entry name" value="Formate--tetrahydrofolate ligase"/>
    <property type="match status" value="1"/>
</dbReference>
<dbReference type="FunFam" id="3.10.410.10:FF:000001">
    <property type="entry name" value="Putative formate--tetrahydrofolate ligase"/>
    <property type="match status" value="1"/>
</dbReference>
<dbReference type="Gene3D" id="3.30.1510.10">
    <property type="entry name" value="Domain 2, N(10)-formyltetrahydrofolate synthetase"/>
    <property type="match status" value="1"/>
</dbReference>
<dbReference type="Gene3D" id="3.10.410.10">
    <property type="entry name" value="Formyltetrahydrofolate synthetase, domain 3"/>
    <property type="match status" value="1"/>
</dbReference>
<dbReference type="Gene3D" id="3.40.50.300">
    <property type="entry name" value="P-loop containing nucleotide triphosphate hydrolases"/>
    <property type="match status" value="1"/>
</dbReference>
<dbReference type="HAMAP" id="MF_01543">
    <property type="entry name" value="FTHFS"/>
    <property type="match status" value="1"/>
</dbReference>
<dbReference type="InterPro" id="IPR000559">
    <property type="entry name" value="Formate_THF_ligase"/>
</dbReference>
<dbReference type="InterPro" id="IPR020628">
    <property type="entry name" value="Formate_THF_ligase_CS"/>
</dbReference>
<dbReference type="InterPro" id="IPR027417">
    <property type="entry name" value="P-loop_NTPase"/>
</dbReference>
<dbReference type="NCBIfam" id="NF010030">
    <property type="entry name" value="PRK13505.1"/>
    <property type="match status" value="1"/>
</dbReference>
<dbReference type="Pfam" id="PF01268">
    <property type="entry name" value="FTHFS"/>
    <property type="match status" value="1"/>
</dbReference>
<dbReference type="SUPFAM" id="SSF52540">
    <property type="entry name" value="P-loop containing nucleoside triphosphate hydrolases"/>
    <property type="match status" value="1"/>
</dbReference>
<dbReference type="PROSITE" id="PS00721">
    <property type="entry name" value="FTHFS_1"/>
    <property type="match status" value="1"/>
</dbReference>
<dbReference type="PROSITE" id="PS00722">
    <property type="entry name" value="FTHFS_2"/>
    <property type="match status" value="1"/>
</dbReference>
<protein>
    <recommendedName>
        <fullName evidence="1">Formate--tetrahydrofolate ligase</fullName>
        <ecNumber evidence="1">6.3.4.3</ecNumber>
    </recommendedName>
    <alternativeName>
        <fullName evidence="1">Formyltetrahydrofolate synthetase</fullName>
        <shortName evidence="1">FHS</shortName>
        <shortName evidence="1">FTHFS</shortName>
    </alternativeName>
</protein>
<sequence length="556" mass="59642">MKTDIEIAQSIELKPIVDVVEKLGISYDDLELYGKYKAKLSFDKIRAVESNPVGKLILVTAINPTPAGEGKSTLTIGLADALNKIGKKTMIAIREPSLGPVMGIKGGAAGGGYAQVLPMEDINLHFTGDMHAITTANNALSALIDNHLHQGNELEIDQRRILWKRVVDLNDRALRHVTVGLGGPLNGIPREDGFDITVASEIMAILCLATDIEDLKRRLANIVIGYRYDRTPVSVGDLQVEGALALILKDAIKPNLVQTIYGTPAFVHGGPFANIAHGCNSVLATTTALHLADYTVTEAGFGADLGAEKFLDIKTPNLPTSPDAVVIVATLRALKMNGGVAKDALTEENVEAVRAGFANLKRHVENIRKFGIPAVVAINEFVSDTEAEIAVLKELCASIDVPVELASVWADGAEGGVALAETVVKTIAENPANYKRLYDNALSVQEKIEKIVTEIYRGSKVNFEKKAQTQIAQIVQNGWDKLPICMAKTQYSFSDNPNALGAPENFEITIRELVPKLGAGFIVALTGDVMTMPGLPKRPAALNMDVESDGTVLGLF</sequence>
<reference key="1">
    <citation type="journal article" date="2010" name="Genome Biol.">
        <title>Structure and dynamics of the pan-genome of Streptococcus pneumoniae and closely related species.</title>
        <authorList>
            <person name="Donati C."/>
            <person name="Hiller N.L."/>
            <person name="Tettelin H."/>
            <person name="Muzzi A."/>
            <person name="Croucher N.J."/>
            <person name="Angiuoli S.V."/>
            <person name="Oggioni M."/>
            <person name="Dunning Hotopp J.C."/>
            <person name="Hu F.Z."/>
            <person name="Riley D.R."/>
            <person name="Covacci A."/>
            <person name="Mitchell T.J."/>
            <person name="Bentley S.D."/>
            <person name="Kilian M."/>
            <person name="Ehrlich G.D."/>
            <person name="Rappuoli R."/>
            <person name="Moxon E.R."/>
            <person name="Masignani V."/>
        </authorList>
    </citation>
    <scope>NUCLEOTIDE SEQUENCE [LARGE SCALE GENOMIC DNA]</scope>
    <source>
        <strain>JJA</strain>
    </source>
</reference>
<name>FTHS_STRZJ</name>